<dbReference type="EC" id="7.1.1.-" evidence="1"/>
<dbReference type="EMBL" id="AE009947">
    <property type="protein sequence ID" value="AAT44698.1"/>
    <property type="molecule type" value="Genomic_DNA"/>
</dbReference>
<dbReference type="SMR" id="Q6L394"/>
<dbReference type="GO" id="GO:0009535">
    <property type="term" value="C:chloroplast thylakoid membrane"/>
    <property type="evidence" value="ECO:0007669"/>
    <property type="project" value="UniProtKB-SubCell"/>
</dbReference>
<dbReference type="GO" id="GO:0030964">
    <property type="term" value="C:NADH dehydrogenase complex"/>
    <property type="evidence" value="ECO:0007669"/>
    <property type="project" value="TreeGrafter"/>
</dbReference>
<dbReference type="GO" id="GO:0008137">
    <property type="term" value="F:NADH dehydrogenase (ubiquinone) activity"/>
    <property type="evidence" value="ECO:0007669"/>
    <property type="project" value="InterPro"/>
</dbReference>
<dbReference type="GO" id="GO:0048038">
    <property type="term" value="F:quinone binding"/>
    <property type="evidence" value="ECO:0007669"/>
    <property type="project" value="UniProtKB-KW"/>
</dbReference>
<dbReference type="GO" id="GO:0019684">
    <property type="term" value="P:photosynthesis, light reaction"/>
    <property type="evidence" value="ECO:0007669"/>
    <property type="project" value="UniProtKB-UniRule"/>
</dbReference>
<dbReference type="FunFam" id="1.20.58.1610:FF:000001">
    <property type="entry name" value="NAD(P)H-quinone oxidoreductase subunit 3, chloroplastic"/>
    <property type="match status" value="1"/>
</dbReference>
<dbReference type="Gene3D" id="1.20.58.1610">
    <property type="entry name" value="NADH:ubiquinone/plastoquinone oxidoreductase, chain 3"/>
    <property type="match status" value="1"/>
</dbReference>
<dbReference type="HAMAP" id="MF_01394">
    <property type="entry name" value="NDH1_NuoA"/>
    <property type="match status" value="1"/>
</dbReference>
<dbReference type="InterPro" id="IPR023043">
    <property type="entry name" value="NAD(P)H_OxRDtase_bac/plastid"/>
</dbReference>
<dbReference type="InterPro" id="IPR000440">
    <property type="entry name" value="NADH_UbQ/plastoQ_OxRdtase_su3"/>
</dbReference>
<dbReference type="InterPro" id="IPR038430">
    <property type="entry name" value="NDAH_ubi_oxred_su3_sf"/>
</dbReference>
<dbReference type="PANTHER" id="PTHR11058">
    <property type="entry name" value="NADH-UBIQUINONE OXIDOREDUCTASE CHAIN 3"/>
    <property type="match status" value="1"/>
</dbReference>
<dbReference type="PANTHER" id="PTHR11058:SF9">
    <property type="entry name" value="NADH-UBIQUINONE OXIDOREDUCTASE CHAIN 3"/>
    <property type="match status" value="1"/>
</dbReference>
<dbReference type="Pfam" id="PF00507">
    <property type="entry name" value="Oxidored_q4"/>
    <property type="match status" value="1"/>
</dbReference>
<evidence type="ECO:0000255" key="1">
    <source>
        <dbReference type="HAMAP-Rule" id="MF_01394"/>
    </source>
</evidence>
<accession>Q6L394</accession>
<reference key="1">
    <citation type="journal article" date="2004" name="Curr. Genet.">
        <title>Structural features and transcript-editing analysis of sugarcane (Saccharum officinarum L.) chloroplast genome.</title>
        <authorList>
            <person name="Calsa T. Jr."/>
            <person name="Carraro D.M."/>
            <person name="Benatti M.R."/>
            <person name="Barbosa A.C."/>
            <person name="Kitajima J.P."/>
            <person name="Carrer H."/>
        </authorList>
    </citation>
    <scope>NUCLEOTIDE SEQUENCE [LARGE SCALE GENOMIC DNA]</scope>
    <source>
        <strain>cv. SP-80-3280</strain>
    </source>
</reference>
<sequence length="120" mass="13860">MFLLHEYDIFWTFLIIASLIPILVFWISGLLAPVSEGPEKLSSYESGIEPMGGAWLQFRIRYYMFALVFVVFDVETVFLYPWAMSFDVLGVSVFIEAFIFVLILVVGLVYAWRKGALEWS</sequence>
<protein>
    <recommendedName>
        <fullName evidence="1">NAD(P)H-quinone oxidoreductase subunit 3, chloroplastic</fullName>
        <ecNumber evidence="1">7.1.1.-</ecNumber>
    </recommendedName>
    <alternativeName>
        <fullName evidence="1">NAD(P)H dehydrogenase subunit 3</fullName>
    </alternativeName>
    <alternativeName>
        <fullName evidence="1">NADH-plastoquinone oxidoreductase subunit 3</fullName>
    </alternativeName>
</protein>
<proteinExistence type="inferred from homology"/>
<organism>
    <name type="scientific">Saccharum hybrid</name>
    <name type="common">Sugarcane</name>
    <dbReference type="NCBI Taxonomy" id="15819"/>
    <lineage>
        <taxon>Eukaryota</taxon>
        <taxon>Viridiplantae</taxon>
        <taxon>Streptophyta</taxon>
        <taxon>Embryophyta</taxon>
        <taxon>Tracheophyta</taxon>
        <taxon>Spermatophyta</taxon>
        <taxon>Magnoliopsida</taxon>
        <taxon>Liliopsida</taxon>
        <taxon>Poales</taxon>
        <taxon>Poaceae</taxon>
        <taxon>PACMAD clade</taxon>
        <taxon>Panicoideae</taxon>
        <taxon>Andropogonodae</taxon>
        <taxon>Andropogoneae</taxon>
        <taxon>Saccharinae</taxon>
        <taxon>Saccharum</taxon>
    </lineage>
</organism>
<geneLocation type="chloroplast"/>
<comment type="function">
    <text evidence="1">NDH shuttles electrons from NAD(P)H:plastoquinone, via FMN and iron-sulfur (Fe-S) centers, to quinones in the photosynthetic chain and possibly in a chloroplast respiratory chain. The immediate electron acceptor for the enzyme in this species is believed to be plastoquinone. Couples the redox reaction to proton translocation, and thus conserves the redox energy in a proton gradient.</text>
</comment>
<comment type="catalytic activity">
    <reaction evidence="1">
        <text>a plastoquinone + NADH + (n+1) H(+)(in) = a plastoquinol + NAD(+) + n H(+)(out)</text>
        <dbReference type="Rhea" id="RHEA:42608"/>
        <dbReference type="Rhea" id="RHEA-COMP:9561"/>
        <dbReference type="Rhea" id="RHEA-COMP:9562"/>
        <dbReference type="ChEBI" id="CHEBI:15378"/>
        <dbReference type="ChEBI" id="CHEBI:17757"/>
        <dbReference type="ChEBI" id="CHEBI:57540"/>
        <dbReference type="ChEBI" id="CHEBI:57945"/>
        <dbReference type="ChEBI" id="CHEBI:62192"/>
    </reaction>
</comment>
<comment type="catalytic activity">
    <reaction evidence="1">
        <text>a plastoquinone + NADPH + (n+1) H(+)(in) = a plastoquinol + NADP(+) + n H(+)(out)</text>
        <dbReference type="Rhea" id="RHEA:42612"/>
        <dbReference type="Rhea" id="RHEA-COMP:9561"/>
        <dbReference type="Rhea" id="RHEA-COMP:9562"/>
        <dbReference type="ChEBI" id="CHEBI:15378"/>
        <dbReference type="ChEBI" id="CHEBI:17757"/>
        <dbReference type="ChEBI" id="CHEBI:57783"/>
        <dbReference type="ChEBI" id="CHEBI:58349"/>
        <dbReference type="ChEBI" id="CHEBI:62192"/>
    </reaction>
</comment>
<comment type="subunit">
    <text evidence="1">NDH is composed of at least 16 different subunits, 5 of which are encoded in the nucleus.</text>
</comment>
<comment type="subcellular location">
    <subcellularLocation>
        <location evidence="1">Plastid</location>
        <location evidence="1">Chloroplast thylakoid membrane</location>
        <topology evidence="1">Multi-pass membrane protein</topology>
    </subcellularLocation>
</comment>
<comment type="similarity">
    <text evidence="1">Belongs to the complex I subunit 3 family.</text>
</comment>
<gene>
    <name evidence="1" type="primary">ndhC</name>
    <name type="ordered locus">PS126</name>
</gene>
<feature type="chain" id="PRO_0000226906" description="NAD(P)H-quinone oxidoreductase subunit 3, chloroplastic">
    <location>
        <begin position="1"/>
        <end position="120"/>
    </location>
</feature>
<feature type="transmembrane region" description="Helical" evidence="1">
    <location>
        <begin position="9"/>
        <end position="29"/>
    </location>
</feature>
<feature type="transmembrane region" description="Helical" evidence="1">
    <location>
        <begin position="64"/>
        <end position="84"/>
    </location>
</feature>
<feature type="transmembrane region" description="Helical" evidence="1">
    <location>
        <begin position="88"/>
        <end position="108"/>
    </location>
</feature>
<keyword id="KW-0150">Chloroplast</keyword>
<keyword id="KW-0472">Membrane</keyword>
<keyword id="KW-0520">NAD</keyword>
<keyword id="KW-0521">NADP</keyword>
<keyword id="KW-0934">Plastid</keyword>
<keyword id="KW-0618">Plastoquinone</keyword>
<keyword id="KW-0874">Quinone</keyword>
<keyword id="KW-0793">Thylakoid</keyword>
<keyword id="KW-1278">Translocase</keyword>
<keyword id="KW-0812">Transmembrane</keyword>
<keyword id="KW-1133">Transmembrane helix</keyword>
<keyword id="KW-0813">Transport</keyword>
<name>NU3C_SACHY</name>